<comment type="function">
    <text evidence="1">May be a substrate-recognition component of a SCF-like ECS (Elongin-Cullin-SOCS-box protein) E3 ubiquitin ligase complex which mediates the ubiquitination and subsequent proteasomal degradation of target proteins.</text>
</comment>
<comment type="pathway">
    <text>Protein modification; protein ubiquitination.</text>
</comment>
<comment type="subcellular location">
    <subcellularLocation>
        <location>Cytoplasm</location>
    </subcellularLocation>
</comment>
<comment type="domain">
    <text evidence="1">The SOCS box domain mediates the interaction with the Elongin BC complex, an adapter module in different E3 ubiquitin ligase complexes.</text>
</comment>
<comment type="similarity">
    <text evidence="5">Belongs to the TUB family.</text>
</comment>
<keyword id="KW-0963">Cytoplasm</keyword>
<keyword id="KW-0488">Methylation</keyword>
<keyword id="KW-0597">Phosphoprotein</keyword>
<keyword id="KW-1185">Reference proteome</keyword>
<keyword id="KW-0677">Repeat</keyword>
<keyword id="KW-0833">Ubl conjugation pathway</keyword>
<keyword id="KW-0853">WD repeat</keyword>
<sequence length="1547" mass="169638">MYAAVEHGPVLCSDSNILCLSWKGRVPKSEKEKPVCRRRYYEEGWLATGNGRGVVGVTFTSSHCRRDRSTPQRINFNLRGHNSEVVLVRWNEPYQKLATCDADGGIFVWIQYEGRWSVELVNDRGAQVSDFTWSHDGTQALISYRDGFVLVGSVSGQRHWSSEINLESQITCGIWTPDDQQVLFGTADGQVIVMDCHGRMLAHVLLHESDGILSMSWNYPIFLVEDSSESDTDSDDYSPPQDGPAAYPIPVQNTKPLLTVSFTSGDISLMNNYDDLSPTVIRSGLKEVVAQWCTQGDLLAVAGMEQQAQLSELPNGPLLKSAMVKFYNVRGEHIFTLDTLVQRPIISICWGHRDSRLLMASGPALYVVRVEHRVSSLQLLCQQAIASTLREDKDVNKLTLPPRLCSYLSTAFIPTIKPPIPDPNNMRDFVSYPSAGNERLHCTMKRTEDDPEVGGPCYTLYLEYLGGLVPILKGRRISKLRPEFVIMDPRTDSKSDEIYGNSLISTVIDSCNCSDSSDIELSDDWAAKKSPKISRSSKSPKLPRISIEARKSPKLPRAAQEISRSPRLPMRKPSMGSPSLTRREFPFEDITQHNYLAQVTSNIWGTKFKIVGLAAFLPTNLGAVIYKTSLLHLQPRQMTIYLPEVRKISMDYINLPVFNPNVFSEDEDDLPVTGASGVPENNPPCTVNIPIAPIHSSAQALSPTQSIGLVQSLLANQNVQLDVLTNQTTAVGSAEHAGDAATQYPVSSRYSNPGQVIFGGVEMGRIIQNPPQLPLPPPPPPPPQAPMQLSAVDHGDRDHEHLQKSAKALRPVPQLAAEGDAVVFSAPQEVQVAKMNPPPPYPGTIPAAPTTAAPPPPLPPPQPPVDVCLKKGDFSLYPTAAHYQPPLGYERITTFDSSGNVEEVCRPRTRMLCSQNTYTLPGPGSSATLRLTATEKKVPQPCTSATLNRLTVPRYSIPTGDPPPYPEIASQLAQGRSAAQRLDNSLIHATLRRNNREVALKMAQLADSSRAPLQPLAKPKGGAAGAVAQLPARPPPALYTCSQCSGAGPSSQSGAALAHAISTSPLASQSSYNLLSPPDTSRDRTDYVNSAFTEDEALSQHCQLEKPLRHPPLPEAAVTMKRPPPYQWDPMLGEDVWVPQERTAQPTVPNPLKLSPLMLGQGQHLDVARVPFVPPKSPSSPTATFPTGYGMGMPYPGSYNNPSLPGVQAPCSPKDALSQAQFAQQESAVVLQPAYPPSLSYCTLPPTYPGSSTCSSVQLPPIALHPWNSYSTCPPMQNTQGTLPPKPHLVVEKPLVSPPPAELQSHMGTEVMVETADNFQEVLSLTESPVPQRTEKFGKKNRKRLDSRAEEGSVQAITEGKVKKDARTLSDFNSLISSPRLGREKKKVKSQKDQLKSKKLNKTNEFQDSSESEPELFISGDELMNQSQGSKKGWKSKRSLRTASELEEFKCRKASEKEDGRLGSQGFVYVMANKQPLWNEATQVYQLDFGGRVTQESAKNFQIELEGRQVMQFGRIDGNAYILDFQYPFSAVQAFAVALANVTQRLK</sequence>
<gene>
    <name type="primary">Tulp4</name>
    <name type="synonym">Tusp</name>
</gene>
<evidence type="ECO:0000250" key="1"/>
<evidence type="ECO:0000250" key="2">
    <source>
        <dbReference type="UniProtKB" id="Q9NRJ4"/>
    </source>
</evidence>
<evidence type="ECO:0000255" key="3">
    <source>
        <dbReference type="PROSITE-ProRule" id="PRU00194"/>
    </source>
</evidence>
<evidence type="ECO:0000256" key="4">
    <source>
        <dbReference type="SAM" id="MobiDB-lite"/>
    </source>
</evidence>
<evidence type="ECO:0000305" key="5"/>
<evidence type="ECO:0007744" key="6">
    <source>
    </source>
</evidence>
<name>TULP4_MOUSE</name>
<reference key="1">
    <citation type="journal article" date="2001" name="Gene">
        <title>Molecular cloning and characterization of the mouse and human TUSP gene, a novel member of the tubby superfamily.</title>
        <authorList>
            <person name="Li Q.-Z."/>
            <person name="Wang C.-Y."/>
            <person name="Shi J.-D."/>
            <person name="Ruan Q.-G."/>
            <person name="Eckenrode S."/>
            <person name="Davoodi-Semiromi A."/>
            <person name="Kukar T."/>
            <person name="Gu Y."/>
            <person name="Lian W."/>
            <person name="Wu D."/>
            <person name="She J.-X."/>
        </authorList>
    </citation>
    <scope>NUCLEOTIDE SEQUENCE [MRNA]</scope>
    <source>
        <strain>C57BL/6J</strain>
        <tissue>Spleen</tissue>
    </source>
</reference>
<reference key="2">
    <citation type="journal article" date="2004" name="Genome Res.">
        <title>The status, quality, and expansion of the NIH full-length cDNA project: the Mammalian Gene Collection (MGC).</title>
        <authorList>
            <consortium name="The MGC Project Team"/>
        </authorList>
    </citation>
    <scope>NUCLEOTIDE SEQUENCE [LARGE SCALE MRNA]</scope>
    <source>
        <tissue>Brain</tissue>
        <tissue>Mammary gland</tissue>
    </source>
</reference>
<reference key="3">
    <citation type="journal article" date="2005" name="Science">
        <title>The transcriptional landscape of the mammalian genome.</title>
        <authorList>
            <person name="Carninci P."/>
            <person name="Kasukawa T."/>
            <person name="Katayama S."/>
            <person name="Gough J."/>
            <person name="Frith M.C."/>
            <person name="Maeda N."/>
            <person name="Oyama R."/>
            <person name="Ravasi T."/>
            <person name="Lenhard B."/>
            <person name="Wells C."/>
            <person name="Kodzius R."/>
            <person name="Shimokawa K."/>
            <person name="Bajic V.B."/>
            <person name="Brenner S.E."/>
            <person name="Batalov S."/>
            <person name="Forrest A.R."/>
            <person name="Zavolan M."/>
            <person name="Davis M.J."/>
            <person name="Wilming L.G."/>
            <person name="Aidinis V."/>
            <person name="Allen J.E."/>
            <person name="Ambesi-Impiombato A."/>
            <person name="Apweiler R."/>
            <person name="Aturaliya R.N."/>
            <person name="Bailey T.L."/>
            <person name="Bansal M."/>
            <person name="Baxter L."/>
            <person name="Beisel K.W."/>
            <person name="Bersano T."/>
            <person name="Bono H."/>
            <person name="Chalk A.M."/>
            <person name="Chiu K.P."/>
            <person name="Choudhary V."/>
            <person name="Christoffels A."/>
            <person name="Clutterbuck D.R."/>
            <person name="Crowe M.L."/>
            <person name="Dalla E."/>
            <person name="Dalrymple B.P."/>
            <person name="de Bono B."/>
            <person name="Della Gatta G."/>
            <person name="di Bernardo D."/>
            <person name="Down T."/>
            <person name="Engstrom P."/>
            <person name="Fagiolini M."/>
            <person name="Faulkner G."/>
            <person name="Fletcher C.F."/>
            <person name="Fukushima T."/>
            <person name="Furuno M."/>
            <person name="Futaki S."/>
            <person name="Gariboldi M."/>
            <person name="Georgii-Hemming P."/>
            <person name="Gingeras T.R."/>
            <person name="Gojobori T."/>
            <person name="Green R.E."/>
            <person name="Gustincich S."/>
            <person name="Harbers M."/>
            <person name="Hayashi Y."/>
            <person name="Hensch T.K."/>
            <person name="Hirokawa N."/>
            <person name="Hill D."/>
            <person name="Huminiecki L."/>
            <person name="Iacono M."/>
            <person name="Ikeo K."/>
            <person name="Iwama A."/>
            <person name="Ishikawa T."/>
            <person name="Jakt M."/>
            <person name="Kanapin A."/>
            <person name="Katoh M."/>
            <person name="Kawasawa Y."/>
            <person name="Kelso J."/>
            <person name="Kitamura H."/>
            <person name="Kitano H."/>
            <person name="Kollias G."/>
            <person name="Krishnan S.P."/>
            <person name="Kruger A."/>
            <person name="Kummerfeld S.K."/>
            <person name="Kurochkin I.V."/>
            <person name="Lareau L.F."/>
            <person name="Lazarevic D."/>
            <person name="Lipovich L."/>
            <person name="Liu J."/>
            <person name="Liuni S."/>
            <person name="McWilliam S."/>
            <person name="Madan Babu M."/>
            <person name="Madera M."/>
            <person name="Marchionni L."/>
            <person name="Matsuda H."/>
            <person name="Matsuzawa S."/>
            <person name="Miki H."/>
            <person name="Mignone F."/>
            <person name="Miyake S."/>
            <person name="Morris K."/>
            <person name="Mottagui-Tabar S."/>
            <person name="Mulder N."/>
            <person name="Nakano N."/>
            <person name="Nakauchi H."/>
            <person name="Ng P."/>
            <person name="Nilsson R."/>
            <person name="Nishiguchi S."/>
            <person name="Nishikawa S."/>
            <person name="Nori F."/>
            <person name="Ohara O."/>
            <person name="Okazaki Y."/>
            <person name="Orlando V."/>
            <person name="Pang K.C."/>
            <person name="Pavan W.J."/>
            <person name="Pavesi G."/>
            <person name="Pesole G."/>
            <person name="Petrovsky N."/>
            <person name="Piazza S."/>
            <person name="Reed J."/>
            <person name="Reid J.F."/>
            <person name="Ring B.Z."/>
            <person name="Ringwald M."/>
            <person name="Rost B."/>
            <person name="Ruan Y."/>
            <person name="Salzberg S.L."/>
            <person name="Sandelin A."/>
            <person name="Schneider C."/>
            <person name="Schoenbach C."/>
            <person name="Sekiguchi K."/>
            <person name="Semple C.A."/>
            <person name="Seno S."/>
            <person name="Sessa L."/>
            <person name="Sheng Y."/>
            <person name="Shibata Y."/>
            <person name="Shimada H."/>
            <person name="Shimada K."/>
            <person name="Silva D."/>
            <person name="Sinclair B."/>
            <person name="Sperling S."/>
            <person name="Stupka E."/>
            <person name="Sugiura K."/>
            <person name="Sultana R."/>
            <person name="Takenaka Y."/>
            <person name="Taki K."/>
            <person name="Tammoja K."/>
            <person name="Tan S.L."/>
            <person name="Tang S."/>
            <person name="Taylor M.S."/>
            <person name="Tegner J."/>
            <person name="Teichmann S.A."/>
            <person name="Ueda H.R."/>
            <person name="van Nimwegen E."/>
            <person name="Verardo R."/>
            <person name="Wei C.L."/>
            <person name="Yagi K."/>
            <person name="Yamanishi H."/>
            <person name="Zabarovsky E."/>
            <person name="Zhu S."/>
            <person name="Zimmer A."/>
            <person name="Hide W."/>
            <person name="Bult C."/>
            <person name="Grimmond S.M."/>
            <person name="Teasdale R.D."/>
            <person name="Liu E.T."/>
            <person name="Brusic V."/>
            <person name="Quackenbush J."/>
            <person name="Wahlestedt C."/>
            <person name="Mattick J.S."/>
            <person name="Hume D.A."/>
            <person name="Kai C."/>
            <person name="Sasaki D."/>
            <person name="Tomaru Y."/>
            <person name="Fukuda S."/>
            <person name="Kanamori-Katayama M."/>
            <person name="Suzuki M."/>
            <person name="Aoki J."/>
            <person name="Arakawa T."/>
            <person name="Iida J."/>
            <person name="Imamura K."/>
            <person name="Itoh M."/>
            <person name="Kato T."/>
            <person name="Kawaji H."/>
            <person name="Kawagashira N."/>
            <person name="Kawashima T."/>
            <person name="Kojima M."/>
            <person name="Kondo S."/>
            <person name="Konno H."/>
            <person name="Nakano K."/>
            <person name="Ninomiya N."/>
            <person name="Nishio T."/>
            <person name="Okada M."/>
            <person name="Plessy C."/>
            <person name="Shibata K."/>
            <person name="Shiraki T."/>
            <person name="Suzuki S."/>
            <person name="Tagami M."/>
            <person name="Waki K."/>
            <person name="Watahiki A."/>
            <person name="Okamura-Oho Y."/>
            <person name="Suzuki H."/>
            <person name="Kawai J."/>
            <person name="Hayashizaki Y."/>
        </authorList>
    </citation>
    <scope>NUCLEOTIDE SEQUENCE [LARGE SCALE MRNA] OF 1122-1547</scope>
    <source>
        <strain>C57BL/6J</strain>
        <tissue>Spinal cord</tissue>
    </source>
</reference>
<reference key="4">
    <citation type="journal article" date="2014" name="Mol. Cell. Proteomics">
        <title>Immunoaffinity enrichment and mass spectrometry analysis of protein methylation.</title>
        <authorList>
            <person name="Guo A."/>
            <person name="Gu H."/>
            <person name="Zhou J."/>
            <person name="Mulhern D."/>
            <person name="Wang Y."/>
            <person name="Lee K.A."/>
            <person name="Yang V."/>
            <person name="Aguiar M."/>
            <person name="Kornhauser J."/>
            <person name="Jia X."/>
            <person name="Ren J."/>
            <person name="Beausoleil S.A."/>
            <person name="Silva J.C."/>
            <person name="Vemulapalli V."/>
            <person name="Bedford M.T."/>
            <person name="Comb M.J."/>
        </authorList>
    </citation>
    <scope>METHYLATION [LARGE SCALE ANALYSIS] AT ARG-949 AND ARG-954</scope>
    <scope>IDENTIFICATION BY MASS SPECTROMETRY [LARGE SCALE ANALYSIS]</scope>
    <source>
        <tissue>Brain</tissue>
        <tissue>Embryo</tissue>
    </source>
</reference>
<feature type="chain" id="PRO_0000186473" description="Tubby-related protein 4">
    <location>
        <begin position="1"/>
        <end position="1547"/>
    </location>
</feature>
<feature type="repeat" description="WD 1">
    <location>
        <begin position="80"/>
        <end position="119"/>
    </location>
</feature>
<feature type="repeat" description="WD 2">
    <location>
        <begin position="123"/>
        <end position="162"/>
    </location>
</feature>
<feature type="repeat" description="WD 3">
    <location>
        <begin position="165"/>
        <end position="204"/>
    </location>
</feature>
<feature type="domain" description="SOCS box" evidence="3">
    <location>
        <begin position="364"/>
        <end position="414"/>
    </location>
</feature>
<feature type="region of interest" description="Disordered" evidence="4">
    <location>
        <begin position="530"/>
        <end position="580"/>
    </location>
</feature>
<feature type="region of interest" description="Disordered" evidence="4">
    <location>
        <begin position="1374"/>
        <end position="1414"/>
    </location>
</feature>
<feature type="region of interest" description="TUB">
    <location>
        <begin position="1436"/>
        <end position="1547"/>
    </location>
</feature>
<feature type="compositionally biased region" description="Low complexity" evidence="4">
    <location>
        <begin position="533"/>
        <end position="546"/>
    </location>
</feature>
<feature type="modified residue" description="Phosphoserine" evidence="2">
    <location>
        <position position="577"/>
    </location>
</feature>
<feature type="modified residue" description="Asymmetric dimethylarginine" evidence="6">
    <location>
        <position position="949"/>
    </location>
</feature>
<feature type="modified residue" description="Asymmetric dimethylarginine" evidence="6">
    <location>
        <position position="954"/>
    </location>
</feature>
<feature type="modified residue" description="Phosphoserine" evidence="2">
    <location>
        <position position="1347"/>
    </location>
</feature>
<feature type="modified residue" description="Phosphoserine" evidence="2">
    <location>
        <position position="1378"/>
    </location>
</feature>
<feature type="sequence conflict" description="In Ref. 3; BAC30348." evidence="5" ref="3">
    <original>G</original>
    <variation>R</variation>
    <location>
        <position position="1420"/>
    </location>
</feature>
<accession>Q9JIL5</accession>
<accession>B2RQP8</accession>
<accession>Q8CA75</accession>
<accession>Q922C2</accession>
<protein>
    <recommendedName>
        <fullName>Tubby-related protein 4</fullName>
    </recommendedName>
    <alternativeName>
        <fullName>Tubby superfamily protein</fullName>
    </alternativeName>
    <alternativeName>
        <fullName>Tubby-like protein 4</fullName>
    </alternativeName>
</protein>
<proteinExistence type="evidence at protein level"/>
<dbReference type="EMBL" id="AF219945">
    <property type="protein sequence ID" value="AAF87974.1"/>
    <property type="molecule type" value="mRNA"/>
</dbReference>
<dbReference type="EMBL" id="AK039439">
    <property type="protein sequence ID" value="BAC30348.1"/>
    <property type="molecule type" value="mRNA"/>
</dbReference>
<dbReference type="EMBL" id="BC008557">
    <property type="protein sequence ID" value="AAH08557.1"/>
    <property type="molecule type" value="mRNA"/>
</dbReference>
<dbReference type="EMBL" id="BC138024">
    <property type="protein sequence ID" value="AAI38025.1"/>
    <property type="molecule type" value="mRNA"/>
</dbReference>
<dbReference type="EMBL" id="BC138025">
    <property type="protein sequence ID" value="AAI38026.1"/>
    <property type="molecule type" value="mRNA"/>
</dbReference>
<dbReference type="CCDS" id="CCDS28370.1"/>
<dbReference type="RefSeq" id="NP_473381.1">
    <property type="nucleotide sequence ID" value="NM_054040.3"/>
</dbReference>
<dbReference type="RefSeq" id="XP_006523314.1">
    <property type="nucleotide sequence ID" value="XM_006523251.5"/>
</dbReference>
<dbReference type="RefSeq" id="XP_030105892.1">
    <property type="nucleotide sequence ID" value="XM_030250032.1"/>
</dbReference>
<dbReference type="RefSeq" id="XP_030105893.1">
    <property type="nucleotide sequence ID" value="XM_030250033.1"/>
</dbReference>
<dbReference type="SMR" id="Q9JIL5"/>
<dbReference type="BioGRID" id="213078">
    <property type="interactions" value="1"/>
</dbReference>
<dbReference type="FunCoup" id="Q9JIL5">
    <property type="interactions" value="2515"/>
</dbReference>
<dbReference type="STRING" id="10090.ENSMUSP00000049248"/>
<dbReference type="GlyGen" id="Q9JIL5">
    <property type="glycosylation" value="3 sites, 1 O-linked glycan (3 sites)"/>
</dbReference>
<dbReference type="iPTMnet" id="Q9JIL5"/>
<dbReference type="PhosphoSitePlus" id="Q9JIL5"/>
<dbReference type="PaxDb" id="10090-ENSMUSP00000049248"/>
<dbReference type="ProteomicsDB" id="298029"/>
<dbReference type="Pumba" id="Q9JIL5"/>
<dbReference type="Antibodypedia" id="1688">
    <property type="antibodies" value="61 antibodies from 19 providers"/>
</dbReference>
<dbReference type="DNASU" id="68842"/>
<dbReference type="Ensembl" id="ENSMUST00000039655.3">
    <property type="protein sequence ID" value="ENSMUSP00000049248.3"/>
    <property type="gene ID" value="ENSMUSG00000034377.11"/>
</dbReference>
<dbReference type="GeneID" id="68842"/>
<dbReference type="KEGG" id="mmu:68842"/>
<dbReference type="UCSC" id="uc008agf.2">
    <property type="organism name" value="mouse"/>
</dbReference>
<dbReference type="AGR" id="MGI:1916092"/>
<dbReference type="CTD" id="56995"/>
<dbReference type="MGI" id="MGI:1916092">
    <property type="gene designation" value="Tulp4"/>
</dbReference>
<dbReference type="VEuPathDB" id="HostDB:ENSMUSG00000034377"/>
<dbReference type="eggNOG" id="KOG2503">
    <property type="taxonomic scope" value="Eukaryota"/>
</dbReference>
<dbReference type="GeneTree" id="ENSGT00940000155913"/>
<dbReference type="HOGENOM" id="CLU_002083_1_0_1"/>
<dbReference type="InParanoid" id="Q9JIL5"/>
<dbReference type="OMA" id="DARVKCM"/>
<dbReference type="OrthoDB" id="8775810at2759"/>
<dbReference type="PhylomeDB" id="Q9JIL5"/>
<dbReference type="TreeFam" id="TF314076"/>
<dbReference type="Reactome" id="R-MMU-8951664">
    <property type="pathway name" value="Neddylation"/>
</dbReference>
<dbReference type="UniPathway" id="UPA00143"/>
<dbReference type="BioGRID-ORCS" id="68842">
    <property type="hits" value="2 hits in 78 CRISPR screens"/>
</dbReference>
<dbReference type="ChiTaRS" id="Tulp4">
    <property type="organism name" value="mouse"/>
</dbReference>
<dbReference type="PRO" id="PR:Q9JIL5"/>
<dbReference type="Proteomes" id="UP000000589">
    <property type="component" value="Chromosome 17"/>
</dbReference>
<dbReference type="RNAct" id="Q9JIL5">
    <property type="molecule type" value="protein"/>
</dbReference>
<dbReference type="Bgee" id="ENSMUSG00000034377">
    <property type="expression patterns" value="Expressed in endothelial cell of lymphatic vessel and 272 other cell types or tissues"/>
</dbReference>
<dbReference type="ExpressionAtlas" id="Q9JIL5">
    <property type="expression patterns" value="baseline and differential"/>
</dbReference>
<dbReference type="GO" id="GO:0005737">
    <property type="term" value="C:cytoplasm"/>
    <property type="evidence" value="ECO:0000266"/>
    <property type="project" value="MGI"/>
</dbReference>
<dbReference type="GO" id="GO:0016567">
    <property type="term" value="P:protein ubiquitination"/>
    <property type="evidence" value="ECO:0007669"/>
    <property type="project" value="UniProtKB-UniPathway"/>
</dbReference>
<dbReference type="FunFam" id="2.130.10.10:FF:000262">
    <property type="entry name" value="Tubby like protein 4"/>
    <property type="match status" value="1"/>
</dbReference>
<dbReference type="FunFam" id="3.20.90.10:FF:000002">
    <property type="entry name" value="Tubby like protein 4"/>
    <property type="match status" value="1"/>
</dbReference>
<dbReference type="Gene3D" id="3.20.90.10">
    <property type="entry name" value="Tubby Protein, Chain A"/>
    <property type="match status" value="1"/>
</dbReference>
<dbReference type="Gene3D" id="2.130.10.10">
    <property type="entry name" value="YVTN repeat-like/Quinoprotein amine dehydrogenase"/>
    <property type="match status" value="1"/>
</dbReference>
<dbReference type="InterPro" id="IPR056159">
    <property type="entry name" value="Beta-prop_WDR35_TULP_N"/>
</dbReference>
<dbReference type="InterPro" id="IPR001496">
    <property type="entry name" value="SOCS_box"/>
</dbReference>
<dbReference type="InterPro" id="IPR025659">
    <property type="entry name" value="Tubby-like_C"/>
</dbReference>
<dbReference type="InterPro" id="IPR000007">
    <property type="entry name" value="Tubby_C"/>
</dbReference>
<dbReference type="InterPro" id="IPR008983">
    <property type="entry name" value="Tumour_necrosis_fac-like_dom"/>
</dbReference>
<dbReference type="InterPro" id="IPR015943">
    <property type="entry name" value="WD40/YVTN_repeat-like_dom_sf"/>
</dbReference>
<dbReference type="InterPro" id="IPR036322">
    <property type="entry name" value="WD40_repeat_dom_sf"/>
</dbReference>
<dbReference type="InterPro" id="IPR001680">
    <property type="entry name" value="WD40_rpt"/>
</dbReference>
<dbReference type="PANTHER" id="PTHR16517">
    <property type="entry name" value="TUBBY-RELATED"/>
    <property type="match status" value="1"/>
</dbReference>
<dbReference type="PANTHER" id="PTHR16517:SF2">
    <property type="entry name" value="TUBBY-RELATED PROTEIN 4"/>
    <property type="match status" value="1"/>
</dbReference>
<dbReference type="Pfam" id="PF24797">
    <property type="entry name" value="Beta-prop_WDR35_TULP_N"/>
    <property type="match status" value="1"/>
</dbReference>
<dbReference type="Pfam" id="PF07525">
    <property type="entry name" value="SOCS_box"/>
    <property type="match status" value="1"/>
</dbReference>
<dbReference type="Pfam" id="PF01167">
    <property type="entry name" value="Tub"/>
    <property type="match status" value="1"/>
</dbReference>
<dbReference type="SMART" id="SM00969">
    <property type="entry name" value="SOCS_box"/>
    <property type="match status" value="1"/>
</dbReference>
<dbReference type="SMART" id="SM00320">
    <property type="entry name" value="WD40"/>
    <property type="match status" value="2"/>
</dbReference>
<dbReference type="SUPFAM" id="SSF49842">
    <property type="entry name" value="TNF-like"/>
    <property type="match status" value="1"/>
</dbReference>
<dbReference type="SUPFAM" id="SSF54518">
    <property type="entry name" value="Tubby C-terminal domain-like"/>
    <property type="match status" value="1"/>
</dbReference>
<dbReference type="SUPFAM" id="SSF50978">
    <property type="entry name" value="WD40 repeat-like"/>
    <property type="match status" value="1"/>
</dbReference>
<dbReference type="PROSITE" id="PS50225">
    <property type="entry name" value="SOCS"/>
    <property type="match status" value="1"/>
</dbReference>
<dbReference type="PROSITE" id="PS50082">
    <property type="entry name" value="WD_REPEATS_2"/>
    <property type="match status" value="1"/>
</dbReference>
<dbReference type="PROSITE" id="PS50294">
    <property type="entry name" value="WD_REPEATS_REGION"/>
    <property type="match status" value="1"/>
</dbReference>
<organism>
    <name type="scientific">Mus musculus</name>
    <name type="common">Mouse</name>
    <dbReference type="NCBI Taxonomy" id="10090"/>
    <lineage>
        <taxon>Eukaryota</taxon>
        <taxon>Metazoa</taxon>
        <taxon>Chordata</taxon>
        <taxon>Craniata</taxon>
        <taxon>Vertebrata</taxon>
        <taxon>Euteleostomi</taxon>
        <taxon>Mammalia</taxon>
        <taxon>Eutheria</taxon>
        <taxon>Euarchontoglires</taxon>
        <taxon>Glires</taxon>
        <taxon>Rodentia</taxon>
        <taxon>Myomorpha</taxon>
        <taxon>Muroidea</taxon>
        <taxon>Muridae</taxon>
        <taxon>Murinae</taxon>
        <taxon>Mus</taxon>
        <taxon>Mus</taxon>
    </lineage>
</organism>